<comment type="function">
    <text evidence="5">Phosphatase which shows a preference for 4'-phosphopantetheine and its oxidatively damaged forms (sulfonate or S-sulfonate), providing strong indirect evidence that the phosphatase activity pre-empts damage in the coenzyme A (CoA) pathway. Hydrolyzing excess 4'-phosphopantetheine could constitute a directed overflow mechanism to prevent its oxidation to the S-sulfonate, sulfonate, or other forms. Hydrolyzing 4'-phosphopantetheine sulfonate or S-sulfonate would forestall their conversion to inactive forms of CoA and acyl carrier protein. May play a role in the physiological regulation of CoA intracellular levels.</text>
</comment>
<comment type="catalytic activity">
    <reaction evidence="5">
        <text>(R)-4'-phosphopantetheine + H2O = (R)-pantetheine + phosphate</text>
        <dbReference type="Rhea" id="RHEA:68328"/>
        <dbReference type="ChEBI" id="CHEBI:15377"/>
        <dbReference type="ChEBI" id="CHEBI:16753"/>
        <dbReference type="ChEBI" id="CHEBI:43474"/>
        <dbReference type="ChEBI" id="CHEBI:61723"/>
    </reaction>
    <physiologicalReaction direction="left-to-right" evidence="5">
        <dbReference type="Rhea" id="RHEA:68329"/>
    </physiologicalReaction>
</comment>
<comment type="catalytic activity">
    <reaction evidence="5">
        <text>(R)-4'-phosphopantetheine sulfonate + H2O = (R)-pantetheine sulfonate + phosphate</text>
        <dbReference type="Rhea" id="RHEA:68336"/>
        <dbReference type="ChEBI" id="CHEBI:15377"/>
        <dbReference type="ChEBI" id="CHEBI:43474"/>
        <dbReference type="ChEBI" id="CHEBI:177300"/>
        <dbReference type="ChEBI" id="CHEBI:177301"/>
    </reaction>
    <physiologicalReaction direction="left-to-right" evidence="5">
        <dbReference type="Rhea" id="RHEA:68337"/>
    </physiologicalReaction>
</comment>
<comment type="catalytic activity">
    <reaction evidence="5">
        <text>(R)-4'-phospho-S-sulfopantetheine + H2O = (R)-S-sulfopantetheine + phosphate</text>
        <dbReference type="Rhea" id="RHEA:68340"/>
        <dbReference type="ChEBI" id="CHEBI:15377"/>
        <dbReference type="ChEBI" id="CHEBI:43474"/>
        <dbReference type="ChEBI" id="CHEBI:177302"/>
        <dbReference type="ChEBI" id="CHEBI:177303"/>
    </reaction>
    <physiologicalReaction direction="left-to-right" evidence="5">
        <dbReference type="Rhea" id="RHEA:68341"/>
    </physiologicalReaction>
</comment>
<comment type="cofactor">
    <cofactor evidence="5">
        <name>Mn(2+)</name>
        <dbReference type="ChEBI" id="CHEBI:29035"/>
    </cofactor>
    <cofactor evidence="5">
        <name>Ni(2+)</name>
        <dbReference type="ChEBI" id="CHEBI:49786"/>
    </cofactor>
</comment>
<comment type="activity regulation">
    <text evidence="5">Activity is strongly promoted by Co(2+), Ni(2+), Mg(2+) and Mn(2+). Activity is inhibited by EDTA.</text>
</comment>
<comment type="subunit">
    <text evidence="4">Homodimer. Interacts with PKM.</text>
</comment>
<comment type="subcellular location">
    <subcellularLocation>
        <location evidence="4">Cytoplasm</location>
    </subcellularLocation>
</comment>
<comment type="alternative products">
    <event type="alternative splicing"/>
    <isoform>
        <id>Q80YV4-1</id>
        <name>1</name>
        <sequence type="displayed"/>
    </isoform>
    <isoform>
        <id>Q80YV4-2</id>
        <name>2</name>
        <sequence type="described" ref="VSP_020381"/>
    </isoform>
    <isoform>
        <id>Q80YV4-3</id>
        <name>3</name>
        <sequence type="described" ref="VSP_020379 VSP_020380"/>
    </isoform>
</comment>
<comment type="tissue specificity">
    <text evidence="7">Expressed in liver, kidney, brain cortex and eye lens (at protein level).</text>
</comment>
<comment type="domain">
    <text evidence="3">Subfamily II proteins have an EGMGR motif about 50 residues from the C-terminus (By similarity). This motif lies near the metal-binding residues in the putative substrate-binding cleft 2 (By similarity). Subfamily II proteins occur only in eukaryotes, in two forms: as a stand-alone unit in plants, and as a C-terminal domain of pantothenate kinases in plants, animals, and chytrid fungi (By similarity).</text>
</comment>
<comment type="disruption phenotype">
    <text evidence="7">Knockout mice have a body weight and a lifespan similar to wild-type animals. About 10% of the animals start developing cataract at 2 months. At 15 months, 50% homozygous animals are affected. Heterozygous animals develop cataract later, with 10% animals affected at 9 months and 25% at 15.</text>
</comment>
<comment type="similarity">
    <text evidence="10">In the N-terminal section; belongs to the type II pantothenate kinase family.</text>
</comment>
<comment type="similarity">
    <text evidence="10">In the C-terminal section; belongs to the damage-control phosphatase family. Phosphopantetheine phosphatase II subfamily.</text>
</comment>
<comment type="caution">
    <text evidence="5">Despite belonging to the type II pantothenate kinase family, the pantothenate kinase domain contains a Val residue at position 147 and a Trp residue at position 211 instead of the two conserved active site residues, Glu and Arg. Lacks pantothenate kinase activity.</text>
</comment>
<sequence>MAERGASGGGSGGDSLDKSITLPPDEIFRNLENAKRFAIDIGGSLTKLAYYSTVQHKVAKVRSFDHPGKDVEQDHEPPYEISVQEEITARLHFIKFENTYMEACLDFIRDHLVNTETKVIQATGGGAYKFKDLIEEKLRLKVDKEDVMTCLIKGCNFVLKNIPHEAFMYQKDSDPEFRFQTNHPNIFPYLLVNIGSGVSIVKVETEDRFEWIGGSSIGGGTFWGLGALLTKTKKFDELLQLASRGRHANVDMLVQDIYGGAHQTLGLSGNLIASSFGKSATADREFSKEDMAKSLLHMISNDIGQLACLYAKLHGLDRVYFGGFFIRGHPVTMRTITYSINFFSKGEVQALFLRHEGYLGAIGAFLKGAEQDNPNQYSWGENYAASSGLMSTSPELCPTQRARSGTFDLLEMDRLERPLVNLPLLLDPSSYVPDTVDLTDDALARQYWLTCFEEALDGVVKRAVASQPESMDAVERAEKFRQKYWGKLQTLRHQPFAYGTLTVRSLLDTREHCLNEFNFPDPYSKVKQKENGLALKCFQSVTRSLDSLGWEERQLALVKGLLAGNVFDWGAKAVSDVLESDPQFGFEEAKRKLQERPWLVDSYTKWLQRLKGPPHKCALIFADNSGIDIILGVFPFVRELLFRGTEVILACNSGPALNDVTYSESLIVAERIAAMDPIICTALREDRLLLVQTGSSSPCLDLSLCTSRTTTCMVLPFAMWVLWTKLKSLVEKCLSPLSILLACSVLSAKSRLDKGLAVLVRERGADLVVIEGMGRAIHTNYHALLRCESLKLAVVKNAWLAERLGGQLFSVIFKYEVPTK</sequence>
<keyword id="KW-0007">Acetylation</keyword>
<keyword id="KW-0025">Alternative splicing</keyword>
<keyword id="KW-0067">ATP-binding</keyword>
<keyword id="KW-0173">Coenzyme A biosynthesis</keyword>
<keyword id="KW-0963">Cytoplasm</keyword>
<keyword id="KW-0378">Hydrolase</keyword>
<keyword id="KW-0464">Manganese</keyword>
<keyword id="KW-0479">Metal-binding</keyword>
<keyword id="KW-0533">Nickel</keyword>
<keyword id="KW-0944">Nitration</keyword>
<keyword id="KW-0547">Nucleotide-binding</keyword>
<keyword id="KW-0597">Phosphoprotein</keyword>
<keyword id="KW-1185">Reference proteome</keyword>
<protein>
    <recommendedName>
        <fullName evidence="5">4'-phosphopantetheine phosphatase</fullName>
        <ecNumber evidence="5">3.1.3.-</ecNumber>
    </recommendedName>
    <alternativeName>
        <fullName evidence="5">Inactive pantothenic acid kinase 4</fullName>
        <shortName evidence="10">mPanK4</shortName>
    </alternativeName>
</protein>
<reference key="1">
    <citation type="journal article" date="2005" name="Science">
        <title>The transcriptional landscape of the mammalian genome.</title>
        <authorList>
            <person name="Carninci P."/>
            <person name="Kasukawa T."/>
            <person name="Katayama S."/>
            <person name="Gough J."/>
            <person name="Frith M.C."/>
            <person name="Maeda N."/>
            <person name="Oyama R."/>
            <person name="Ravasi T."/>
            <person name="Lenhard B."/>
            <person name="Wells C."/>
            <person name="Kodzius R."/>
            <person name="Shimokawa K."/>
            <person name="Bajic V.B."/>
            <person name="Brenner S.E."/>
            <person name="Batalov S."/>
            <person name="Forrest A.R."/>
            <person name="Zavolan M."/>
            <person name="Davis M.J."/>
            <person name="Wilming L.G."/>
            <person name="Aidinis V."/>
            <person name="Allen J.E."/>
            <person name="Ambesi-Impiombato A."/>
            <person name="Apweiler R."/>
            <person name="Aturaliya R.N."/>
            <person name="Bailey T.L."/>
            <person name="Bansal M."/>
            <person name="Baxter L."/>
            <person name="Beisel K.W."/>
            <person name="Bersano T."/>
            <person name="Bono H."/>
            <person name="Chalk A.M."/>
            <person name="Chiu K.P."/>
            <person name="Choudhary V."/>
            <person name="Christoffels A."/>
            <person name="Clutterbuck D.R."/>
            <person name="Crowe M.L."/>
            <person name="Dalla E."/>
            <person name="Dalrymple B.P."/>
            <person name="de Bono B."/>
            <person name="Della Gatta G."/>
            <person name="di Bernardo D."/>
            <person name="Down T."/>
            <person name="Engstrom P."/>
            <person name="Fagiolini M."/>
            <person name="Faulkner G."/>
            <person name="Fletcher C.F."/>
            <person name="Fukushima T."/>
            <person name="Furuno M."/>
            <person name="Futaki S."/>
            <person name="Gariboldi M."/>
            <person name="Georgii-Hemming P."/>
            <person name="Gingeras T.R."/>
            <person name="Gojobori T."/>
            <person name="Green R.E."/>
            <person name="Gustincich S."/>
            <person name="Harbers M."/>
            <person name="Hayashi Y."/>
            <person name="Hensch T.K."/>
            <person name="Hirokawa N."/>
            <person name="Hill D."/>
            <person name="Huminiecki L."/>
            <person name="Iacono M."/>
            <person name="Ikeo K."/>
            <person name="Iwama A."/>
            <person name="Ishikawa T."/>
            <person name="Jakt M."/>
            <person name="Kanapin A."/>
            <person name="Katoh M."/>
            <person name="Kawasawa Y."/>
            <person name="Kelso J."/>
            <person name="Kitamura H."/>
            <person name="Kitano H."/>
            <person name="Kollias G."/>
            <person name="Krishnan S.P."/>
            <person name="Kruger A."/>
            <person name="Kummerfeld S.K."/>
            <person name="Kurochkin I.V."/>
            <person name="Lareau L.F."/>
            <person name="Lazarevic D."/>
            <person name="Lipovich L."/>
            <person name="Liu J."/>
            <person name="Liuni S."/>
            <person name="McWilliam S."/>
            <person name="Madan Babu M."/>
            <person name="Madera M."/>
            <person name="Marchionni L."/>
            <person name="Matsuda H."/>
            <person name="Matsuzawa S."/>
            <person name="Miki H."/>
            <person name="Mignone F."/>
            <person name="Miyake S."/>
            <person name="Morris K."/>
            <person name="Mottagui-Tabar S."/>
            <person name="Mulder N."/>
            <person name="Nakano N."/>
            <person name="Nakauchi H."/>
            <person name="Ng P."/>
            <person name="Nilsson R."/>
            <person name="Nishiguchi S."/>
            <person name="Nishikawa S."/>
            <person name="Nori F."/>
            <person name="Ohara O."/>
            <person name="Okazaki Y."/>
            <person name="Orlando V."/>
            <person name="Pang K.C."/>
            <person name="Pavan W.J."/>
            <person name="Pavesi G."/>
            <person name="Pesole G."/>
            <person name="Petrovsky N."/>
            <person name="Piazza S."/>
            <person name="Reed J."/>
            <person name="Reid J.F."/>
            <person name="Ring B.Z."/>
            <person name="Ringwald M."/>
            <person name="Rost B."/>
            <person name="Ruan Y."/>
            <person name="Salzberg S.L."/>
            <person name="Sandelin A."/>
            <person name="Schneider C."/>
            <person name="Schoenbach C."/>
            <person name="Sekiguchi K."/>
            <person name="Semple C.A."/>
            <person name="Seno S."/>
            <person name="Sessa L."/>
            <person name="Sheng Y."/>
            <person name="Shibata Y."/>
            <person name="Shimada H."/>
            <person name="Shimada K."/>
            <person name="Silva D."/>
            <person name="Sinclair B."/>
            <person name="Sperling S."/>
            <person name="Stupka E."/>
            <person name="Sugiura K."/>
            <person name="Sultana R."/>
            <person name="Takenaka Y."/>
            <person name="Taki K."/>
            <person name="Tammoja K."/>
            <person name="Tan S.L."/>
            <person name="Tang S."/>
            <person name="Taylor M.S."/>
            <person name="Tegner J."/>
            <person name="Teichmann S.A."/>
            <person name="Ueda H.R."/>
            <person name="van Nimwegen E."/>
            <person name="Verardo R."/>
            <person name="Wei C.L."/>
            <person name="Yagi K."/>
            <person name="Yamanishi H."/>
            <person name="Zabarovsky E."/>
            <person name="Zhu S."/>
            <person name="Zimmer A."/>
            <person name="Hide W."/>
            <person name="Bult C."/>
            <person name="Grimmond S.M."/>
            <person name="Teasdale R.D."/>
            <person name="Liu E.T."/>
            <person name="Brusic V."/>
            <person name="Quackenbush J."/>
            <person name="Wahlestedt C."/>
            <person name="Mattick J.S."/>
            <person name="Hume D.A."/>
            <person name="Kai C."/>
            <person name="Sasaki D."/>
            <person name="Tomaru Y."/>
            <person name="Fukuda S."/>
            <person name="Kanamori-Katayama M."/>
            <person name="Suzuki M."/>
            <person name="Aoki J."/>
            <person name="Arakawa T."/>
            <person name="Iida J."/>
            <person name="Imamura K."/>
            <person name="Itoh M."/>
            <person name="Kato T."/>
            <person name="Kawaji H."/>
            <person name="Kawagashira N."/>
            <person name="Kawashima T."/>
            <person name="Kojima M."/>
            <person name="Kondo S."/>
            <person name="Konno H."/>
            <person name="Nakano K."/>
            <person name="Ninomiya N."/>
            <person name="Nishio T."/>
            <person name="Okada M."/>
            <person name="Plessy C."/>
            <person name="Shibata K."/>
            <person name="Shiraki T."/>
            <person name="Suzuki S."/>
            <person name="Tagami M."/>
            <person name="Waki K."/>
            <person name="Watahiki A."/>
            <person name="Okamura-Oho Y."/>
            <person name="Suzuki H."/>
            <person name="Kawai J."/>
            <person name="Hayashizaki Y."/>
        </authorList>
    </citation>
    <scope>NUCLEOTIDE SEQUENCE [LARGE SCALE MRNA] (ISOFORM 2)</scope>
    <source>
        <strain>C57BL/6J</strain>
        <tissue>Embryo</tissue>
    </source>
</reference>
<reference key="2">
    <citation type="journal article" date="2009" name="PLoS Biol.">
        <title>Lineage-specific biology revealed by a finished genome assembly of the mouse.</title>
        <authorList>
            <person name="Church D.M."/>
            <person name="Goodstadt L."/>
            <person name="Hillier L.W."/>
            <person name="Zody M.C."/>
            <person name="Goldstein S."/>
            <person name="She X."/>
            <person name="Bult C.J."/>
            <person name="Agarwala R."/>
            <person name="Cherry J.L."/>
            <person name="DiCuccio M."/>
            <person name="Hlavina W."/>
            <person name="Kapustin Y."/>
            <person name="Meric P."/>
            <person name="Maglott D."/>
            <person name="Birtle Z."/>
            <person name="Marques A.C."/>
            <person name="Graves T."/>
            <person name="Zhou S."/>
            <person name="Teague B."/>
            <person name="Potamousis K."/>
            <person name="Churas C."/>
            <person name="Place M."/>
            <person name="Herschleb J."/>
            <person name="Runnheim R."/>
            <person name="Forrest D."/>
            <person name="Amos-Landgraf J."/>
            <person name="Schwartz D.C."/>
            <person name="Cheng Z."/>
            <person name="Lindblad-Toh K."/>
            <person name="Eichler E.E."/>
            <person name="Ponting C.P."/>
        </authorList>
    </citation>
    <scope>NUCLEOTIDE SEQUENCE [LARGE SCALE GENOMIC DNA]</scope>
    <source>
        <strain>C57BL/6J</strain>
    </source>
</reference>
<reference key="3">
    <citation type="journal article" date="2004" name="Genome Res.">
        <title>The status, quality, and expansion of the NIH full-length cDNA project: the Mammalian Gene Collection (MGC).</title>
        <authorList>
            <consortium name="The MGC Project Team"/>
        </authorList>
    </citation>
    <scope>NUCLEOTIDE SEQUENCE [LARGE SCALE MRNA] (ISOFORM 1)</scope>
    <source>
        <strain>C57BL/6J</strain>
        <tissue>Embryo</tissue>
    </source>
</reference>
<reference key="4">
    <citation type="journal article" date="2001" name="Nat. Genet.">
        <title>A novel pantothenate kinase gene (PANK2) is defective in Hallervorden-Spatz syndrome.</title>
        <authorList>
            <person name="Zhou B."/>
            <person name="Westaway S.K."/>
            <person name="Levinson B."/>
            <person name="Johnson M.A."/>
            <person name="Gitschier J."/>
            <person name="Hayflick S.J."/>
        </authorList>
    </citation>
    <scope>NUCLEOTIDE SEQUENCE [MRNA] OF 3-820 (ISOFORM 3)</scope>
</reference>
<reference key="5">
    <citation type="journal article" date="2006" name="Biochemistry">
        <title>Endogenously nitrated proteins in mouse brain: links to neurodegenerative disease.</title>
        <authorList>
            <person name="Sacksteder C.A."/>
            <person name="Qian W.-J."/>
            <person name="Knyushko T.V."/>
            <person name="Wang H."/>
            <person name="Chin M.H."/>
            <person name="Lacan G."/>
            <person name="Melega W.P."/>
            <person name="Camp D.G. II"/>
            <person name="Smith R.D."/>
            <person name="Smith D.J."/>
            <person name="Squier T.C."/>
            <person name="Bigelow D.J."/>
        </authorList>
    </citation>
    <scope>NITRATION [LARGE SCALE ANALYSIS] AT TYR-320</scope>
    <scope>IDENTIFICATION BY MASS SPECTROMETRY [LARGE SCALE ANALYSIS]</scope>
    <source>
        <tissue>Brain</tissue>
    </source>
</reference>
<reference key="6">
    <citation type="journal article" date="2010" name="Cell">
        <title>A tissue-specific atlas of mouse protein phosphorylation and expression.</title>
        <authorList>
            <person name="Huttlin E.L."/>
            <person name="Jedrychowski M.P."/>
            <person name="Elias J.E."/>
            <person name="Goswami T."/>
            <person name="Rad R."/>
            <person name="Beausoleil S.A."/>
            <person name="Villen J."/>
            <person name="Haas W."/>
            <person name="Sowa M.E."/>
            <person name="Gygi S.P."/>
        </authorList>
    </citation>
    <scope>PHOSPHORYLATION [LARGE SCALE ANALYSIS] AT SER-404 AND THR-406</scope>
    <scope>IDENTIFICATION BY MASS SPECTROMETRY [LARGE SCALE ANALYSIS]</scope>
    <source>
        <tissue>Brain</tissue>
        <tissue>Brown adipose tissue</tissue>
        <tissue>Heart</tissue>
        <tissue>Kidney</tissue>
        <tissue>Liver</tissue>
        <tissue>Lung</tissue>
        <tissue>Pancreas</tissue>
        <tissue>Spleen</tissue>
        <tissue>Testis</tissue>
    </source>
</reference>
<reference key="7">
    <citation type="journal article" date="2019" name="Hum. Mutat.">
        <title>A novel mutation of PANK4 causes autosomal dominant congenital posterior cataract.</title>
        <authorList>
            <person name="Sun M."/>
            <person name="Chen C."/>
            <person name="Hou S."/>
            <person name="Li X."/>
            <person name="Wang H."/>
            <person name="Zhou J."/>
            <person name="Chen X."/>
            <person name="Liu P."/>
            <person name="Kijlstra A."/>
            <person name="Lin S."/>
            <person name="Ye J."/>
        </authorList>
    </citation>
    <scope>TISSUE SPECIFICITY</scope>
    <scope>DISRUPTION PHENOTYPE</scope>
</reference>
<dbReference type="EC" id="3.1.3.-" evidence="5"/>
<dbReference type="EMBL" id="AK050894">
    <property type="protein sequence ID" value="BAC34450.1"/>
    <property type="molecule type" value="mRNA"/>
</dbReference>
<dbReference type="EMBL" id="BX004788">
    <property type="status" value="NOT_ANNOTATED_CDS"/>
    <property type="molecule type" value="Genomic_DNA"/>
</dbReference>
<dbReference type="EMBL" id="BC050089">
    <property type="protein sequence ID" value="AAH50089.1"/>
    <property type="molecule type" value="mRNA"/>
</dbReference>
<dbReference type="EMBL" id="BK000016">
    <property type="protein sequence ID" value="DAA00010.1"/>
    <property type="molecule type" value="mRNA"/>
</dbReference>
<dbReference type="CCDS" id="CCDS19019.1">
    <molecule id="Q80YV4-2"/>
</dbReference>
<dbReference type="CCDS" id="CCDS84834.1">
    <molecule id="Q80YV4-1"/>
</dbReference>
<dbReference type="RefSeq" id="NP_001292733.1">
    <molecule id="Q80YV4-1"/>
    <property type="nucleotide sequence ID" value="NM_001305804.2"/>
</dbReference>
<dbReference type="RefSeq" id="NP_766578.2">
    <molecule id="Q80YV4-2"/>
    <property type="nucleotide sequence ID" value="NM_172990.6"/>
</dbReference>
<dbReference type="SMR" id="Q80YV4"/>
<dbReference type="BioGRID" id="234679">
    <property type="interactions" value="10"/>
</dbReference>
<dbReference type="FunCoup" id="Q80YV4">
    <property type="interactions" value="2952"/>
</dbReference>
<dbReference type="IntAct" id="Q80YV4">
    <property type="interactions" value="7"/>
</dbReference>
<dbReference type="STRING" id="10090.ENSMUSP00000064330"/>
<dbReference type="GlyGen" id="Q80YV4">
    <property type="glycosylation" value="1 site, 1 O-linked glycan (1 site)"/>
</dbReference>
<dbReference type="iPTMnet" id="Q80YV4"/>
<dbReference type="PhosphoSitePlus" id="Q80YV4"/>
<dbReference type="jPOST" id="Q80YV4"/>
<dbReference type="PaxDb" id="10090-ENSMUSP00000030931"/>
<dbReference type="PeptideAtlas" id="Q80YV4"/>
<dbReference type="ProteomicsDB" id="294155">
    <molecule id="Q80YV4-1"/>
</dbReference>
<dbReference type="ProteomicsDB" id="294156">
    <molecule id="Q80YV4-2"/>
</dbReference>
<dbReference type="ProteomicsDB" id="294157">
    <molecule id="Q80YV4-3"/>
</dbReference>
<dbReference type="Pumba" id="Q80YV4"/>
<dbReference type="Antibodypedia" id="1627">
    <property type="antibodies" value="142 antibodies from 21 providers"/>
</dbReference>
<dbReference type="DNASU" id="269614"/>
<dbReference type="Ensembl" id="ENSMUST00000030931.11">
    <molecule id="Q80YV4-2"/>
    <property type="protein sequence ID" value="ENSMUSP00000030931.5"/>
    <property type="gene ID" value="ENSMUSG00000029056.14"/>
</dbReference>
<dbReference type="Ensembl" id="ENSMUST00000070953.11">
    <molecule id="Q80YV4-1"/>
    <property type="protein sequence ID" value="ENSMUSP00000064330.5"/>
    <property type="gene ID" value="ENSMUSG00000029056.14"/>
</dbReference>
<dbReference type="GeneID" id="269614"/>
<dbReference type="KEGG" id="mmu:269614"/>
<dbReference type="UCSC" id="uc008wcl.3">
    <molecule id="Q80YV4-2"/>
    <property type="organism name" value="mouse"/>
</dbReference>
<dbReference type="UCSC" id="uc012dqn.2">
    <molecule id="Q80YV4-1"/>
    <property type="organism name" value="mouse"/>
</dbReference>
<dbReference type="AGR" id="MGI:2387466"/>
<dbReference type="CTD" id="55229"/>
<dbReference type="MGI" id="MGI:2387466">
    <property type="gene designation" value="Pank4"/>
</dbReference>
<dbReference type="VEuPathDB" id="HostDB:ENSMUSG00000029056"/>
<dbReference type="eggNOG" id="KOG2201">
    <property type="taxonomic scope" value="Eukaryota"/>
</dbReference>
<dbReference type="eggNOG" id="KOG4584">
    <property type="taxonomic scope" value="Eukaryota"/>
</dbReference>
<dbReference type="GeneTree" id="ENSGT00940000158896"/>
<dbReference type="HOGENOM" id="CLU_012496_1_1_1"/>
<dbReference type="InParanoid" id="Q80YV4"/>
<dbReference type="OMA" id="LNEYKYW"/>
<dbReference type="OrthoDB" id="498611at2759"/>
<dbReference type="PhylomeDB" id="Q80YV4"/>
<dbReference type="TreeFam" id="TF342917"/>
<dbReference type="Reactome" id="R-MMU-199220">
    <property type="pathway name" value="Vitamin B5 (pantothenate) metabolism"/>
</dbReference>
<dbReference type="BioGRID-ORCS" id="269614">
    <property type="hits" value="0 hits in 61 CRISPR screens"/>
</dbReference>
<dbReference type="ChiTaRS" id="Pank4">
    <property type="organism name" value="mouse"/>
</dbReference>
<dbReference type="PRO" id="PR:Q80YV4"/>
<dbReference type="Proteomes" id="UP000000589">
    <property type="component" value="Chromosome 4"/>
</dbReference>
<dbReference type="RNAct" id="Q80YV4">
    <property type="molecule type" value="protein"/>
</dbReference>
<dbReference type="Bgee" id="ENSMUSG00000029056">
    <property type="expression patterns" value="Expressed in retinal neural layer and 234 other cell types or tissues"/>
</dbReference>
<dbReference type="ExpressionAtlas" id="Q80YV4">
    <property type="expression patterns" value="baseline and differential"/>
</dbReference>
<dbReference type="GO" id="GO:0005829">
    <property type="term" value="C:cytosol"/>
    <property type="evidence" value="ECO:0000266"/>
    <property type="project" value="MGI"/>
</dbReference>
<dbReference type="GO" id="GO:0005615">
    <property type="term" value="C:extracellular space"/>
    <property type="evidence" value="ECO:0000266"/>
    <property type="project" value="MGI"/>
</dbReference>
<dbReference type="GO" id="GO:0005524">
    <property type="term" value="F:ATP binding"/>
    <property type="evidence" value="ECO:0007669"/>
    <property type="project" value="UniProtKB-KW"/>
</dbReference>
<dbReference type="GO" id="GO:0046872">
    <property type="term" value="F:metal ion binding"/>
    <property type="evidence" value="ECO:0007669"/>
    <property type="project" value="UniProtKB-KW"/>
</dbReference>
<dbReference type="GO" id="GO:0004594">
    <property type="term" value="F:pantothenate kinase activity"/>
    <property type="evidence" value="ECO:0007669"/>
    <property type="project" value="InterPro"/>
</dbReference>
<dbReference type="GO" id="GO:0016791">
    <property type="term" value="F:phosphatase activity"/>
    <property type="evidence" value="ECO:0000266"/>
    <property type="project" value="MGI"/>
</dbReference>
<dbReference type="GO" id="GO:0015937">
    <property type="term" value="P:coenzyme A biosynthetic process"/>
    <property type="evidence" value="ECO:0007669"/>
    <property type="project" value="UniProtKB-KW"/>
</dbReference>
<dbReference type="GO" id="GO:0015938">
    <property type="term" value="P:coenzyme A catabolic process"/>
    <property type="evidence" value="ECO:0000266"/>
    <property type="project" value="MGI"/>
</dbReference>
<dbReference type="CDD" id="cd24123">
    <property type="entry name" value="ASKHA_NBD_PanK-II_Pank4"/>
    <property type="match status" value="1"/>
</dbReference>
<dbReference type="FunFam" id="1.20.1700.10:FF:000001">
    <property type="entry name" value="Pantothenate kinase 4"/>
    <property type="match status" value="1"/>
</dbReference>
<dbReference type="FunFam" id="3.30.420.40:FF:000067">
    <property type="entry name" value="Pantothenate kinase 4"/>
    <property type="match status" value="1"/>
</dbReference>
<dbReference type="FunFam" id="3.30.420.510:FF:000002">
    <property type="entry name" value="Pantothenate kinase 4"/>
    <property type="match status" value="1"/>
</dbReference>
<dbReference type="FunFam" id="3.40.50.10880:FF:000001">
    <property type="entry name" value="Pantothenate kinase 4"/>
    <property type="match status" value="1"/>
</dbReference>
<dbReference type="Gene3D" id="3.30.420.40">
    <property type="match status" value="1"/>
</dbReference>
<dbReference type="Gene3D" id="3.30.420.510">
    <property type="match status" value="1"/>
</dbReference>
<dbReference type="Gene3D" id="1.20.1700.10">
    <property type="entry name" value="AF1104-like"/>
    <property type="match status" value="1"/>
</dbReference>
<dbReference type="Gene3D" id="1.10.285.20">
    <property type="entry name" value="Uncharacterised protein PF01937, DUF89, domain 2"/>
    <property type="match status" value="1"/>
</dbReference>
<dbReference type="Gene3D" id="3.40.50.10880">
    <property type="entry name" value="Uncharacterised protein PF01937, DUF89, domain 3"/>
    <property type="match status" value="2"/>
</dbReference>
<dbReference type="InterPro" id="IPR036075">
    <property type="entry name" value="ARMT-1-like_metal-bd_sf"/>
</dbReference>
<dbReference type="InterPro" id="IPR002791">
    <property type="entry name" value="ARMT1-like_metal-bd"/>
</dbReference>
<dbReference type="InterPro" id="IPR035073">
    <property type="entry name" value="At2g17340_3_helix_bundle"/>
</dbReference>
<dbReference type="InterPro" id="IPR043129">
    <property type="entry name" value="ATPase_NBD"/>
</dbReference>
<dbReference type="InterPro" id="IPR015844">
    <property type="entry name" value="PanK_long"/>
</dbReference>
<dbReference type="InterPro" id="IPR004567">
    <property type="entry name" value="Type_II_PanK"/>
</dbReference>
<dbReference type="NCBIfam" id="TIGR00555">
    <property type="entry name" value="panK_eukar"/>
    <property type="match status" value="1"/>
</dbReference>
<dbReference type="PANTHER" id="PTHR12280:SF20">
    <property type="entry name" value="4'-PHOSPHOPANTETHEINE PHOSPHATASE"/>
    <property type="match status" value="1"/>
</dbReference>
<dbReference type="PANTHER" id="PTHR12280">
    <property type="entry name" value="PANTOTHENATE KINASE"/>
    <property type="match status" value="1"/>
</dbReference>
<dbReference type="Pfam" id="PF01937">
    <property type="entry name" value="ARMT1-like_dom"/>
    <property type="match status" value="1"/>
</dbReference>
<dbReference type="Pfam" id="PF03630">
    <property type="entry name" value="Fumble"/>
    <property type="match status" value="1"/>
</dbReference>
<dbReference type="PIRSF" id="PIRSF036939">
    <property type="entry name" value="PanK_long"/>
    <property type="match status" value="1"/>
</dbReference>
<dbReference type="SUPFAM" id="SSF53067">
    <property type="entry name" value="Actin-like ATPase domain"/>
    <property type="match status" value="2"/>
</dbReference>
<dbReference type="SUPFAM" id="SSF111321">
    <property type="entry name" value="AF1104-like"/>
    <property type="match status" value="2"/>
</dbReference>
<proteinExistence type="evidence at protein level"/>
<name>PANK4_MOUSE</name>
<gene>
    <name type="primary">Pank4</name>
</gene>
<organism>
    <name type="scientific">Mus musculus</name>
    <name type="common">Mouse</name>
    <dbReference type="NCBI Taxonomy" id="10090"/>
    <lineage>
        <taxon>Eukaryota</taxon>
        <taxon>Metazoa</taxon>
        <taxon>Chordata</taxon>
        <taxon>Craniata</taxon>
        <taxon>Vertebrata</taxon>
        <taxon>Euteleostomi</taxon>
        <taxon>Mammalia</taxon>
        <taxon>Eutheria</taxon>
        <taxon>Euarchontoglires</taxon>
        <taxon>Glires</taxon>
        <taxon>Rodentia</taxon>
        <taxon>Myomorpha</taxon>
        <taxon>Muroidea</taxon>
        <taxon>Muridae</taxon>
        <taxon>Murinae</taxon>
        <taxon>Mus</taxon>
        <taxon>Mus</taxon>
    </lineage>
</organism>
<feature type="initiator methionine" description="Removed" evidence="5">
    <location>
        <position position="1"/>
    </location>
</feature>
<feature type="chain" id="PRO_0000249248" description="4'-phosphopantetheine phosphatase">
    <location>
        <begin position="2"/>
        <end position="820"/>
    </location>
</feature>
<feature type="region of interest" description="Disordered" evidence="6">
    <location>
        <begin position="1"/>
        <end position="20"/>
    </location>
</feature>
<feature type="region of interest" description="Pantothenate kinase" evidence="5">
    <location>
        <begin position="2"/>
        <end position="402"/>
    </location>
</feature>
<feature type="region of interest" description="4'-phosphopantetheine phosphatase" evidence="5">
    <location>
        <begin position="403"/>
        <end position="820"/>
    </location>
</feature>
<feature type="short sequence motif" description="Subfamily II EGMGR motif" evidence="5">
    <location>
        <begin position="771"/>
        <end position="775"/>
    </location>
</feature>
<feature type="compositionally biased region" description="Gly residues" evidence="6">
    <location>
        <begin position="1"/>
        <end position="13"/>
    </location>
</feature>
<feature type="binding site" evidence="1">
    <location>
        <position position="196"/>
    </location>
    <ligand>
        <name>acetyl-CoA</name>
        <dbReference type="ChEBI" id="CHEBI:57288"/>
    </ligand>
</feature>
<feature type="binding site" evidence="1">
    <location>
        <position position="199"/>
    </location>
    <ligand>
        <name>acetyl-CoA</name>
        <dbReference type="ChEBI" id="CHEBI:57288"/>
    </ligand>
</feature>
<feature type="binding site" evidence="2">
    <location>
        <position position="623"/>
    </location>
    <ligand>
        <name>Mn(2+)</name>
        <dbReference type="ChEBI" id="CHEBI:29035"/>
        <note>catalytic; for phosphatase activity</note>
    </ligand>
</feature>
<feature type="binding site" evidence="2">
    <location>
        <position position="624"/>
    </location>
    <ligand>
        <name>Mn(2+)</name>
        <dbReference type="ChEBI" id="CHEBI:29035"/>
        <note>catalytic; for phosphatase activity</note>
    </ligand>
</feature>
<feature type="binding site" evidence="2">
    <location>
        <position position="659"/>
    </location>
    <ligand>
        <name>Mn(2+)</name>
        <dbReference type="ChEBI" id="CHEBI:29035"/>
        <note>catalytic; for phosphatase activity</note>
    </ligand>
</feature>
<feature type="modified residue" description="N-acetylalanine" evidence="5">
    <location>
        <position position="2"/>
    </location>
</feature>
<feature type="modified residue" description="3'-nitrotyrosine" evidence="11">
    <location>
        <position position="320"/>
    </location>
</feature>
<feature type="modified residue" description="Phosphoserine" evidence="5">
    <location>
        <position position="393"/>
    </location>
</feature>
<feature type="modified residue" description="Phosphoserine" evidence="12">
    <location>
        <position position="404"/>
    </location>
</feature>
<feature type="modified residue" description="Phosphothreonine" evidence="12">
    <location>
        <position position="406"/>
    </location>
</feature>
<feature type="splice variant" id="VSP_020379" description="In isoform 3." evidence="8">
    <original>NP</original>
    <variation>SE</variation>
    <location>
        <begin position="373"/>
        <end position="374"/>
    </location>
</feature>
<feature type="splice variant" id="VSP_020380" description="In isoform 3." evidence="8">
    <location>
        <begin position="375"/>
        <end position="820"/>
    </location>
</feature>
<feature type="splice variant" id="VSP_020381" description="In isoform 2." evidence="9">
    <location>
        <begin position="703"/>
        <end position="749"/>
    </location>
</feature>
<feature type="sequence conflict" description="In Ref. 3; AAH50089." evidence="10" ref="3">
    <original>I</original>
    <variation>T</variation>
    <location>
        <position position="81"/>
    </location>
</feature>
<feature type="sequence conflict" description="In Ref. 3; AAH50089." evidence="10" ref="3">
    <original>D</original>
    <variation>G</variation>
    <location>
        <position position="146"/>
    </location>
</feature>
<feature type="sequence conflict" description="In Ref. 4; DAA00010." evidence="10" ref="4">
    <original>S</original>
    <variation>A</variation>
    <location>
        <position position="173"/>
    </location>
</feature>
<feature type="sequence conflict" description="In Ref. 3; AAH50089." evidence="10" ref="3">
    <original>T</original>
    <variation>I</variation>
    <location>
        <position position="205"/>
    </location>
</feature>
<feature type="sequence conflict" description="In Ref. 3; AAH50089." evidence="10" ref="3">
    <original>S</original>
    <variation>F</variation>
    <location>
        <position position="243"/>
    </location>
</feature>
<feature type="sequence conflict" description="In Ref. 3; AAH50089." evidence="10" ref="3">
    <original>L</original>
    <variation>P</variation>
    <location>
        <position position="351"/>
    </location>
</feature>
<feature type="sequence conflict" description="In Ref. 1; BAC34450." evidence="10" ref="1">
    <original>K</original>
    <variation>E</variation>
    <location>
        <position position="479"/>
    </location>
</feature>
<feature type="sequence conflict" description="In Ref. 1; BAC34450." evidence="10" ref="1">
    <original>P</original>
    <variation>T</variation>
    <location>
        <position position="635"/>
    </location>
</feature>
<accession>Q80YV4</accession>
<accession>B1AZN5</accession>
<accession>B1AZN6</accession>
<accession>Q7M751</accession>
<accession>Q8BQE9</accession>
<evidence type="ECO:0000250" key="1"/>
<evidence type="ECO:0000250" key="2">
    <source>
        <dbReference type="UniProtKB" id="Q04371"/>
    </source>
</evidence>
<evidence type="ECO:0000250" key="3">
    <source>
        <dbReference type="UniProtKB" id="Q8K4K6"/>
    </source>
</evidence>
<evidence type="ECO:0000250" key="4">
    <source>
        <dbReference type="UniProtKB" id="Q923S8"/>
    </source>
</evidence>
<evidence type="ECO:0000250" key="5">
    <source>
        <dbReference type="UniProtKB" id="Q9NVE7"/>
    </source>
</evidence>
<evidence type="ECO:0000256" key="6">
    <source>
        <dbReference type="SAM" id="MobiDB-lite"/>
    </source>
</evidence>
<evidence type="ECO:0000269" key="7">
    <source>
    </source>
</evidence>
<evidence type="ECO:0000303" key="8">
    <source>
    </source>
</evidence>
<evidence type="ECO:0000303" key="9">
    <source>
    </source>
</evidence>
<evidence type="ECO:0000305" key="10"/>
<evidence type="ECO:0007744" key="11">
    <source>
    </source>
</evidence>
<evidence type="ECO:0007744" key="12">
    <source>
    </source>
</evidence>